<dbReference type="EC" id="2.3.1.74"/>
<dbReference type="EMBL" id="X63333">
    <property type="protein sequence ID" value="CAA44933.1"/>
    <property type="molecule type" value="mRNA"/>
</dbReference>
<dbReference type="EMBL" id="D10661">
    <property type="protein sequence ID" value="BAA01512.1"/>
    <property type="molecule type" value="Genomic_DNA"/>
</dbReference>
<dbReference type="PIR" id="S33610">
    <property type="entry name" value="S33610"/>
</dbReference>
<dbReference type="SMR" id="Q01286"/>
<dbReference type="UniPathway" id="UPA00154"/>
<dbReference type="GO" id="GO:0016210">
    <property type="term" value="F:naringenin-chalcone synthase activity"/>
    <property type="evidence" value="ECO:0007669"/>
    <property type="project" value="UniProtKB-EC"/>
</dbReference>
<dbReference type="GO" id="GO:0009813">
    <property type="term" value="P:flavonoid biosynthetic process"/>
    <property type="evidence" value="ECO:0007669"/>
    <property type="project" value="UniProtKB-UniPathway"/>
</dbReference>
<dbReference type="GO" id="GO:0030639">
    <property type="term" value="P:polyketide biosynthetic process"/>
    <property type="evidence" value="ECO:0007669"/>
    <property type="project" value="TreeGrafter"/>
</dbReference>
<dbReference type="CDD" id="cd00831">
    <property type="entry name" value="CHS_like"/>
    <property type="match status" value="1"/>
</dbReference>
<dbReference type="FunFam" id="3.40.47.10:FF:000014">
    <property type="entry name" value="Chalcone synthase 1"/>
    <property type="match status" value="1"/>
</dbReference>
<dbReference type="FunFam" id="3.40.47.10:FF:000025">
    <property type="entry name" value="Chalcone synthase 2"/>
    <property type="match status" value="1"/>
</dbReference>
<dbReference type="Gene3D" id="3.40.47.10">
    <property type="match status" value="2"/>
</dbReference>
<dbReference type="InterPro" id="IPR012328">
    <property type="entry name" value="Chalcone/stilbene_synt_C"/>
</dbReference>
<dbReference type="InterPro" id="IPR001099">
    <property type="entry name" value="Chalcone/stilbene_synt_N"/>
</dbReference>
<dbReference type="InterPro" id="IPR018088">
    <property type="entry name" value="Chalcone/stilbene_synthase_AS"/>
</dbReference>
<dbReference type="InterPro" id="IPR011141">
    <property type="entry name" value="Polyketide_synthase_type-III"/>
</dbReference>
<dbReference type="InterPro" id="IPR016039">
    <property type="entry name" value="Thiolase-like"/>
</dbReference>
<dbReference type="PANTHER" id="PTHR11877:SF62">
    <property type="entry name" value="CHALCONE SYNTHASE 7"/>
    <property type="match status" value="1"/>
</dbReference>
<dbReference type="PANTHER" id="PTHR11877">
    <property type="entry name" value="HYDROXYMETHYLGLUTARYL-COA SYNTHASE"/>
    <property type="match status" value="1"/>
</dbReference>
<dbReference type="Pfam" id="PF02797">
    <property type="entry name" value="Chal_sti_synt_C"/>
    <property type="match status" value="1"/>
</dbReference>
<dbReference type="Pfam" id="PF00195">
    <property type="entry name" value="Chal_sti_synt_N"/>
    <property type="match status" value="1"/>
</dbReference>
<dbReference type="PIRSF" id="PIRSF000451">
    <property type="entry name" value="PKS_III"/>
    <property type="match status" value="1"/>
</dbReference>
<dbReference type="SUPFAM" id="SSF53901">
    <property type="entry name" value="Thiolase-like"/>
    <property type="match status" value="2"/>
</dbReference>
<dbReference type="PROSITE" id="PS00441">
    <property type="entry name" value="CHALCONE_SYNTH"/>
    <property type="match status" value="1"/>
</dbReference>
<reference key="1">
    <citation type="journal article" date="1992" name="Plant Mol. Biol.">
        <title>Molecular cloning of chalcone synthase cDNAs from Pisum sativum.</title>
        <authorList>
            <person name="Ichinose Y."/>
            <person name="Kawamata S."/>
            <person name="Yamada T."/>
            <person name="An C."/>
            <person name="Kajiwara T."/>
            <person name="Shiraishi T."/>
            <person name="Oku H."/>
        </authorList>
    </citation>
    <scope>NUCLEOTIDE SEQUENCE [MRNA]</scope>
    <source>
        <strain>cv. Midoriusui</strain>
        <tissue>Epicotyl</tissue>
    </source>
</reference>
<reference key="2">
    <citation type="journal article" date="1993" name="Plant Mol. Biol.">
        <title>Organization of the genes encoding chalcone synthase in Pisum sativum.</title>
        <authorList>
            <person name="An C."/>
            <person name="Ichinose Y."/>
            <person name="Yamada T."/>
            <person name="Tanaka Y."/>
            <person name="Shiraishi T."/>
            <person name="Oku H."/>
        </authorList>
    </citation>
    <scope>NUCLEOTIDE SEQUENCE [GENOMIC DNA]</scope>
</reference>
<proteinExistence type="evidence at transcript level"/>
<protein>
    <recommendedName>
        <fullName>Chalcone synthase 1</fullName>
        <ecNumber>2.3.1.74</ecNumber>
    </recommendedName>
    <alternativeName>
        <fullName>Naregenin-chalcone synthase 1</fullName>
    </alternativeName>
</protein>
<sequence length="389" mass="42803">MVSVSEIRKPQRAEGPATILAIGTANPANCVEQSTYPDFYFKITNSEHKTVLKEKFQRMCDKSMIKRRYMYLTEEILKENPSLCEYMAPSLDARQDMVVVEVPRLGKEAAVKAIKEWGQPKSKITHLIFCTTSGVDMPGADYQLTKLLGLRPYVKRYMMYQQGCFAGGTVLRLAKDLAENNKGARVLVVCSEVTAVTFRGPSDTHLDSLVGQALFGDGAAALIVGSDPVPEIEKPIFEMVWTAQTIAPDSEGAIDGHLREQGLTFHLLKDVPGIVSKNIDKALVEAFKPLGISDYNSIFWIAHPGGPAILDQVEQKLGLKPEKMRATREVLSEYGNMSSACVLFILDQMRKKSTQDGLNTTGEGLEWGVLFGFGPGLTIETVVLHSVAI</sequence>
<keyword id="KW-0012">Acyltransferase</keyword>
<keyword id="KW-0284">Flavonoid biosynthesis</keyword>
<keyword id="KW-0808">Transferase</keyword>
<organism>
    <name type="scientific">Pisum sativum</name>
    <name type="common">Garden pea</name>
    <name type="synonym">Lathyrus oleraceus</name>
    <dbReference type="NCBI Taxonomy" id="3888"/>
    <lineage>
        <taxon>Eukaryota</taxon>
        <taxon>Viridiplantae</taxon>
        <taxon>Streptophyta</taxon>
        <taxon>Embryophyta</taxon>
        <taxon>Tracheophyta</taxon>
        <taxon>Spermatophyta</taxon>
        <taxon>Magnoliopsida</taxon>
        <taxon>eudicotyledons</taxon>
        <taxon>Gunneridae</taxon>
        <taxon>Pentapetalae</taxon>
        <taxon>rosids</taxon>
        <taxon>fabids</taxon>
        <taxon>Fabales</taxon>
        <taxon>Fabaceae</taxon>
        <taxon>Papilionoideae</taxon>
        <taxon>50 kb inversion clade</taxon>
        <taxon>NPAAA clade</taxon>
        <taxon>Hologalegina</taxon>
        <taxon>IRL clade</taxon>
        <taxon>Fabeae</taxon>
        <taxon>Pisum</taxon>
    </lineage>
</organism>
<gene>
    <name type="primary">CHS1</name>
</gene>
<accession>Q01286</accession>
<feature type="chain" id="PRO_0000216018" description="Chalcone synthase 1">
    <location>
        <begin position="1"/>
        <end position="389"/>
    </location>
</feature>
<feature type="active site" evidence="1">
    <location>
        <position position="164"/>
    </location>
</feature>
<comment type="function">
    <text>The primary product of this enzyme is 4,2',4',6'-tetrahydroxychalcone (also termed naringenin-chalcone or chalcone) which can under specific conditions spontaneously isomerize into naringenin.</text>
</comment>
<comment type="catalytic activity">
    <reaction evidence="1">
        <text>(E)-4-coumaroyl-CoA + 3 malonyl-CoA + 3 H(+) = 2',4,4',6'-tetrahydroxychalcone + 3 CO2 + 4 CoA</text>
        <dbReference type="Rhea" id="RHEA:11128"/>
        <dbReference type="ChEBI" id="CHEBI:15378"/>
        <dbReference type="ChEBI" id="CHEBI:15413"/>
        <dbReference type="ChEBI" id="CHEBI:16526"/>
        <dbReference type="ChEBI" id="CHEBI:57287"/>
        <dbReference type="ChEBI" id="CHEBI:57384"/>
        <dbReference type="ChEBI" id="CHEBI:85008"/>
        <dbReference type="EC" id="2.3.1.74"/>
    </reaction>
</comment>
<comment type="pathway">
    <text>Secondary metabolite biosynthesis; flavonoid biosynthesis.</text>
</comment>
<comment type="similarity">
    <text evidence="2">Belongs to the thiolase-like superfamily. Chalcone/stilbene synthases family.</text>
</comment>
<name>CHS1_PEA</name>
<evidence type="ECO:0000255" key="1">
    <source>
        <dbReference type="PROSITE-ProRule" id="PRU10023"/>
    </source>
</evidence>
<evidence type="ECO:0000305" key="2"/>